<keyword id="KW-0963">Cytoplasm</keyword>
<keyword id="KW-1185">Reference proteome</keyword>
<keyword id="KW-0819">tRNA processing</keyword>
<comment type="function">
    <text evidence="1">Sulfur carrier protein involved in sulfur trafficking in the cell. Part of a sulfur-relay system required for 2-thiolation during synthesis of 2-thiouridine of the modified wobble base 5-methylaminomethyl-2-thiouridine (mnm(5)s(2)U) in tRNA. Interacts with IscS and stimulates its cysteine desulfurase activity. Accepts an activated sulfur from IscS, which is then transferred to TusD, and thus determines the direction of sulfur flow from IscS to 2-thiouridine formation. Also appears to be involved in sulfur transfer for the biosynthesis of molybdopterin.</text>
</comment>
<comment type="pathway">
    <text evidence="1">tRNA modification.</text>
</comment>
<comment type="subunit">
    <text evidence="1">Interacts with IscS.</text>
</comment>
<comment type="subcellular location">
    <subcellularLocation>
        <location evidence="1">Cytoplasm</location>
    </subcellularLocation>
</comment>
<comment type="similarity">
    <text evidence="1">Belongs to the sulfur carrier protein TusA family.</text>
</comment>
<name>TUSA_ECO24</name>
<proteinExistence type="inferred from homology"/>
<sequence length="81" mass="9095">MTDLFSSPDHTLDALGLRCPEPVMMVRKTVRNMQPGETLLIIADDPATTRDIPGFCTFMEHELVAKETDGLPYRYLIRKGG</sequence>
<organism>
    <name type="scientific">Escherichia coli O139:H28 (strain E24377A / ETEC)</name>
    <dbReference type="NCBI Taxonomy" id="331111"/>
    <lineage>
        <taxon>Bacteria</taxon>
        <taxon>Pseudomonadati</taxon>
        <taxon>Pseudomonadota</taxon>
        <taxon>Gammaproteobacteria</taxon>
        <taxon>Enterobacterales</taxon>
        <taxon>Enterobacteriaceae</taxon>
        <taxon>Escherichia</taxon>
    </lineage>
</organism>
<gene>
    <name evidence="1" type="primary">tusA</name>
    <name type="ordered locus">EcE24377A_3952</name>
</gene>
<accession>A7ZT06</accession>
<dbReference type="EMBL" id="CP000800">
    <property type="protein sequence ID" value="ABV16567.1"/>
    <property type="molecule type" value="Genomic_DNA"/>
</dbReference>
<dbReference type="RefSeq" id="WP_000130621.1">
    <property type="nucleotide sequence ID" value="NC_009801.1"/>
</dbReference>
<dbReference type="BMRB" id="A7ZT06"/>
<dbReference type="SMR" id="A7ZT06"/>
<dbReference type="GeneID" id="93778521"/>
<dbReference type="KEGG" id="ecw:EcE24377A_3952"/>
<dbReference type="HOGENOM" id="CLU_165255_5_0_6"/>
<dbReference type="Proteomes" id="UP000001122">
    <property type="component" value="Chromosome"/>
</dbReference>
<dbReference type="GO" id="GO:0005737">
    <property type="term" value="C:cytoplasm"/>
    <property type="evidence" value="ECO:0007669"/>
    <property type="project" value="UniProtKB-SubCell"/>
</dbReference>
<dbReference type="GO" id="GO:0097163">
    <property type="term" value="F:sulfur carrier activity"/>
    <property type="evidence" value="ECO:0007669"/>
    <property type="project" value="UniProtKB-UniRule"/>
</dbReference>
<dbReference type="GO" id="GO:0002143">
    <property type="term" value="P:tRNA wobble position uridine thiolation"/>
    <property type="evidence" value="ECO:0007669"/>
    <property type="project" value="InterPro"/>
</dbReference>
<dbReference type="CDD" id="cd03423">
    <property type="entry name" value="SirA"/>
    <property type="match status" value="1"/>
</dbReference>
<dbReference type="FunFam" id="3.30.110.40:FF:000002">
    <property type="entry name" value="Sulfur carrier protein TusA"/>
    <property type="match status" value="1"/>
</dbReference>
<dbReference type="Gene3D" id="3.30.110.40">
    <property type="entry name" value="TusA-like domain"/>
    <property type="match status" value="1"/>
</dbReference>
<dbReference type="HAMAP" id="MF_00413">
    <property type="entry name" value="Thiourid_synth_A"/>
    <property type="match status" value="1"/>
</dbReference>
<dbReference type="InterPro" id="IPR022931">
    <property type="entry name" value="Sulphur_carrier_TusA"/>
</dbReference>
<dbReference type="InterPro" id="IPR001455">
    <property type="entry name" value="TusA-like"/>
</dbReference>
<dbReference type="InterPro" id="IPR036868">
    <property type="entry name" value="TusA-like_sf"/>
</dbReference>
<dbReference type="NCBIfam" id="NF001423">
    <property type="entry name" value="PRK00299.1"/>
    <property type="match status" value="1"/>
</dbReference>
<dbReference type="PANTHER" id="PTHR33279:SF2">
    <property type="entry name" value="SULFUR CARRIER PROTEIN TUSA"/>
    <property type="match status" value="1"/>
</dbReference>
<dbReference type="PANTHER" id="PTHR33279">
    <property type="entry name" value="SULFUR CARRIER PROTEIN YEDF-RELATED"/>
    <property type="match status" value="1"/>
</dbReference>
<dbReference type="Pfam" id="PF01206">
    <property type="entry name" value="TusA"/>
    <property type="match status" value="1"/>
</dbReference>
<dbReference type="SUPFAM" id="SSF64307">
    <property type="entry name" value="SirA-like"/>
    <property type="match status" value="1"/>
</dbReference>
<dbReference type="PROSITE" id="PS01148">
    <property type="entry name" value="UPF0033"/>
    <property type="match status" value="1"/>
</dbReference>
<evidence type="ECO:0000255" key="1">
    <source>
        <dbReference type="HAMAP-Rule" id="MF_00413"/>
    </source>
</evidence>
<feature type="chain" id="PRO_1000060059" description="Sulfur carrier protein TusA">
    <location>
        <begin position="1"/>
        <end position="81"/>
    </location>
</feature>
<feature type="active site" description="Cysteine persulfide intermediate" evidence="1">
    <location>
        <position position="19"/>
    </location>
</feature>
<protein>
    <recommendedName>
        <fullName evidence="1">Sulfur carrier protein TusA</fullName>
    </recommendedName>
    <alternativeName>
        <fullName evidence="1">Sulfur mediator TusA</fullName>
    </alternativeName>
    <alternativeName>
        <fullName evidence="1">Sulfur transfer protein TusA</fullName>
    </alternativeName>
    <alternativeName>
        <fullName evidence="1">tRNA 2-thiouridine synthesizing protein A</fullName>
    </alternativeName>
</protein>
<reference key="1">
    <citation type="journal article" date="2008" name="J. Bacteriol.">
        <title>The pangenome structure of Escherichia coli: comparative genomic analysis of E. coli commensal and pathogenic isolates.</title>
        <authorList>
            <person name="Rasko D.A."/>
            <person name="Rosovitz M.J."/>
            <person name="Myers G.S.A."/>
            <person name="Mongodin E.F."/>
            <person name="Fricke W.F."/>
            <person name="Gajer P."/>
            <person name="Crabtree J."/>
            <person name="Sebaihia M."/>
            <person name="Thomson N.R."/>
            <person name="Chaudhuri R."/>
            <person name="Henderson I.R."/>
            <person name="Sperandio V."/>
            <person name="Ravel J."/>
        </authorList>
    </citation>
    <scope>NUCLEOTIDE SEQUENCE [LARGE SCALE GENOMIC DNA]</scope>
    <source>
        <strain>E24377A / ETEC</strain>
    </source>
</reference>